<gene>
    <name evidence="1" type="primary">NP</name>
</gene>
<sequence>MASQGTKRSYEQMETGGERQNATEIRASVGRMVGGIGRFYIQMCTELKLSDYEGRLIQNSITIERMVLSAFDERRNKYLEEHPSAGKDPKKTGGPIYRRRDGKWMRELILYDKEEIRRIWRQANNGEDATAGLTHLMIWHSNLNDATYQRTRALVRTGMDPRMCSLMQGSTLPRRSGAAGAAVKGVGTMVMELIRMIKRGINDRNFWRGENGRRTRIAYERMCNILKGKFQTAAQRAMMDQVRESRNPGNAEIEDLIFLARSALILRGSVAHKSCLPACVYGLAVASGYEFEREGYSLVGIDPFRLLQNSQVFSLIRPKENPAHKSQLVWMACHSAAFEDLRVSSFIRGTRVVPRGQLSTRGVQIASNENMEAMDSSTLELRSRYWAIRTRSGGNTNQQRASAGQISVQPTFSVQRNLPFERATIMAAFTGNTEGRTSDMRTEIIRMMESARPEDVSFQGRGVFELSDEKATNPIVPSFDMSNEGSYFFGDNAEEYDN</sequence>
<feature type="chain" id="PRO_0000079112" description="Nucleoprotein">
    <location>
        <begin position="1"/>
        <end position="498"/>
    </location>
</feature>
<feature type="region of interest" description="Disordered" evidence="2">
    <location>
        <begin position="1"/>
        <end position="21"/>
    </location>
</feature>
<feature type="short sequence motif" description="Unconventional nuclear localization signal" evidence="1">
    <location>
        <begin position="1"/>
        <end position="18"/>
    </location>
</feature>
<feature type="short sequence motif" description="Bipartite nuclear localization signal" evidence="1">
    <location>
        <begin position="198"/>
        <end position="216"/>
    </location>
</feature>
<protein>
    <recommendedName>
        <fullName evidence="1">Nucleoprotein</fullName>
    </recommendedName>
    <alternativeName>
        <fullName evidence="1">Nucleocapsid protein</fullName>
        <shortName evidence="1">Protein N</shortName>
    </alternativeName>
</protein>
<proteinExistence type="inferred from homology"/>
<organismHost>
    <name type="scientific">Aves</name>
    <dbReference type="NCBI Taxonomy" id="8782"/>
</organismHost>
<organismHost>
    <name type="scientific">Cetacea</name>
    <name type="common">whales</name>
    <dbReference type="NCBI Taxonomy" id="9721"/>
</organismHost>
<keyword id="KW-0167">Capsid protein</keyword>
<keyword id="KW-1139">Helical capsid protein</keyword>
<keyword id="KW-1048">Host nucleus</keyword>
<keyword id="KW-0945">Host-virus interaction</keyword>
<keyword id="KW-0687">Ribonucleoprotein</keyword>
<keyword id="KW-0694">RNA-binding</keyword>
<keyword id="KW-0543">Viral nucleoprotein</keyword>
<keyword id="KW-1163">Viral penetration into host nucleus</keyword>
<keyword id="KW-0946">Virion</keyword>
<keyword id="KW-1160">Virus entry into host cell</keyword>
<evidence type="ECO:0000255" key="1">
    <source>
        <dbReference type="HAMAP-Rule" id="MF_04070"/>
    </source>
</evidence>
<evidence type="ECO:0000256" key="2">
    <source>
        <dbReference type="SAM" id="MobiDB-lite"/>
    </source>
</evidence>
<reference key="1">
    <citation type="journal article" date="1990" name="Virology">
        <title>Derivation of the nucleoproteins (NP) of influenza A viruses isolated from marine mammals.</title>
        <authorList>
            <person name="Mandler J."/>
            <person name="Gorman O.T."/>
            <person name="Ludwig S."/>
            <person name="Schroeder E."/>
            <person name="Fitch W.M."/>
            <person name="Webster R.G."/>
            <person name="Scholtissek C."/>
        </authorList>
    </citation>
    <scope>NUCLEOTIDE SEQUENCE [GENOMIC RNA]</scope>
</reference>
<organism>
    <name type="scientific">Influenza A virus (strain A/Whale/Pacific ocean/19/1976 H1N3)</name>
    <dbReference type="NCBI Taxonomy" id="11486"/>
    <lineage>
        <taxon>Viruses</taxon>
        <taxon>Riboviria</taxon>
        <taxon>Orthornavirae</taxon>
        <taxon>Negarnaviricota</taxon>
        <taxon>Polyploviricotina</taxon>
        <taxon>Insthoviricetes</taxon>
        <taxon>Articulavirales</taxon>
        <taxon>Orthomyxoviridae</taxon>
        <taxon>Alphainfluenzavirus</taxon>
        <taxon>Alphainfluenzavirus influenzae</taxon>
        <taxon>Influenza A virus</taxon>
    </lineage>
</organism>
<name>NCAP_I76AE</name>
<accession>P26052</accession>
<comment type="function">
    <text evidence="1">Encapsidates the negative strand viral RNA, protecting it from nucleases. The encapsidated genomic RNA is termed the ribonucleoprotein (RNP) and serves as template for transcription and replication. The RNP needs to be localized in the host nucleus to start an infectious cycle, but is too large to diffuse through the nuclear pore complex. NP comprises at least 2 nuclear localization signals that are responsible for the active RNP import into the nucleus through cellular importin alpha/beta pathway. Later in the infection, nclear export of RNPs are mediated through viral proteins NEP interacting with M1 which binds nucleoproteins. It is possible that nucleoprotein binds directly host exportin-1/XPO1 and plays an active role in RNPs nuclear export. M1 interaction with RNP seems to hide nucleoprotein's nuclear localization signals. Soon after a virion infects a new cell, M1 dissociates from the RNP under acidification of the virion driven by M2 protein. Dissociation of M1 from RNP unmasks nucleoprotein's nuclear localization signals, targeting the RNP to the nucleus.</text>
</comment>
<comment type="subunit">
    <text evidence="1">Homomultimerizes to form the nucleocapsid. May bind host exportin-1/XPO1. Binds to viral genomic RNA. Protein-RNA contacts are mediated by a combination of electrostatic interactions between positively charged residues and the phosphate backbone and planar interactions between aromatic side chains and bases.</text>
</comment>
<comment type="subcellular location">
    <subcellularLocation>
        <location evidence="1">Virion</location>
    </subcellularLocation>
    <subcellularLocation>
        <location evidence="1">Host nucleus</location>
    </subcellularLocation>
</comment>
<comment type="PTM">
    <text evidence="1">Late in virus-infected cells, may be cleaved from a 56-kDa protein to a 53-kDa protein by a cellular caspase. This cleavage might be a marker for the onset of apoptosis in infected cells or have a specific function in virus host interaction.</text>
</comment>
<comment type="similarity">
    <text evidence="1">Belongs to the influenza viruses nucleoprotein family.</text>
</comment>
<dbReference type="EMBL" id="M27517">
    <property type="protein sequence ID" value="AAA43655.1"/>
    <property type="molecule type" value="Genomic_RNA"/>
</dbReference>
<dbReference type="SMR" id="P26052"/>
<dbReference type="GO" id="GO:0019029">
    <property type="term" value="C:helical viral capsid"/>
    <property type="evidence" value="ECO:0007669"/>
    <property type="project" value="UniProtKB-UniRule"/>
</dbReference>
<dbReference type="GO" id="GO:0043657">
    <property type="term" value="C:host cell"/>
    <property type="evidence" value="ECO:0007669"/>
    <property type="project" value="GOC"/>
</dbReference>
<dbReference type="GO" id="GO:0042025">
    <property type="term" value="C:host cell nucleus"/>
    <property type="evidence" value="ECO:0007669"/>
    <property type="project" value="UniProtKB-SubCell"/>
</dbReference>
<dbReference type="GO" id="GO:1990904">
    <property type="term" value="C:ribonucleoprotein complex"/>
    <property type="evidence" value="ECO:0007669"/>
    <property type="project" value="UniProtKB-KW"/>
</dbReference>
<dbReference type="GO" id="GO:0019013">
    <property type="term" value="C:viral nucleocapsid"/>
    <property type="evidence" value="ECO:0007669"/>
    <property type="project" value="UniProtKB-UniRule"/>
</dbReference>
<dbReference type="GO" id="GO:0003723">
    <property type="term" value="F:RNA binding"/>
    <property type="evidence" value="ECO:0007669"/>
    <property type="project" value="UniProtKB-UniRule"/>
</dbReference>
<dbReference type="GO" id="GO:0005198">
    <property type="term" value="F:structural molecule activity"/>
    <property type="evidence" value="ECO:0007669"/>
    <property type="project" value="UniProtKB-UniRule"/>
</dbReference>
<dbReference type="GO" id="GO:0046718">
    <property type="term" value="P:symbiont entry into host cell"/>
    <property type="evidence" value="ECO:0007669"/>
    <property type="project" value="UniProtKB-KW"/>
</dbReference>
<dbReference type="GO" id="GO:0075732">
    <property type="term" value="P:viral penetration into host nucleus"/>
    <property type="evidence" value="ECO:0007669"/>
    <property type="project" value="UniProtKB-UniRule"/>
</dbReference>
<dbReference type="HAMAP" id="MF_04070">
    <property type="entry name" value="INFV_NCAP"/>
    <property type="match status" value="1"/>
</dbReference>
<dbReference type="InterPro" id="IPR002141">
    <property type="entry name" value="Flu_NP"/>
</dbReference>
<dbReference type="Pfam" id="PF00506">
    <property type="entry name" value="Flu_NP"/>
    <property type="match status" value="1"/>
</dbReference>
<dbReference type="SUPFAM" id="SSF161003">
    <property type="entry name" value="flu NP-like"/>
    <property type="match status" value="1"/>
</dbReference>